<proteinExistence type="inferred from homology"/>
<accession>B4TV65</accession>
<protein>
    <recommendedName>
        <fullName evidence="1">UPF0301 protein YqgE</fullName>
    </recommendedName>
</protein>
<sequence>MNLQHHFLIAMPALQDPIFRRSVVYICEHNQDGAMGIIVNKPLENLQIEGILEKLKITPEPRDSAIRLDKAVMLGGPLAEDRGFILHTPPSRFASSIRISDNTVITTSRDVLETLGTQQQPSDVLVALGYASWDKGQLEQELLDNAWLTAPADLNILFKTPIAERWREAAKLIGIDILTMPGVAGHA</sequence>
<name>YQGE_SALSV</name>
<feature type="chain" id="PRO_1000198298" description="UPF0301 protein YqgE">
    <location>
        <begin position="1"/>
        <end position="187"/>
    </location>
</feature>
<reference key="1">
    <citation type="journal article" date="2011" name="J. Bacteriol.">
        <title>Comparative genomics of 28 Salmonella enterica isolates: evidence for CRISPR-mediated adaptive sublineage evolution.</title>
        <authorList>
            <person name="Fricke W.F."/>
            <person name="Mammel M.K."/>
            <person name="McDermott P.F."/>
            <person name="Tartera C."/>
            <person name="White D.G."/>
            <person name="Leclerc J.E."/>
            <person name="Ravel J."/>
            <person name="Cebula T.A."/>
        </authorList>
    </citation>
    <scope>NUCLEOTIDE SEQUENCE [LARGE SCALE GENOMIC DNA]</scope>
    <source>
        <strain>CVM19633</strain>
    </source>
</reference>
<comment type="similarity">
    <text evidence="1">Belongs to the UPF0301 (AlgH) family.</text>
</comment>
<gene>
    <name evidence="1" type="primary">yqgE</name>
    <name type="ordered locus">SeSA_A3270</name>
</gene>
<dbReference type="EMBL" id="CP001127">
    <property type="protein sequence ID" value="ACF90376.1"/>
    <property type="molecule type" value="Genomic_DNA"/>
</dbReference>
<dbReference type="RefSeq" id="WP_001053171.1">
    <property type="nucleotide sequence ID" value="NC_011094.1"/>
</dbReference>
<dbReference type="SMR" id="B4TV65"/>
<dbReference type="KEGG" id="sew:SeSA_A3270"/>
<dbReference type="HOGENOM" id="CLU_057596_1_0_6"/>
<dbReference type="Proteomes" id="UP000001865">
    <property type="component" value="Chromosome"/>
</dbReference>
<dbReference type="GO" id="GO:0005829">
    <property type="term" value="C:cytosol"/>
    <property type="evidence" value="ECO:0007669"/>
    <property type="project" value="TreeGrafter"/>
</dbReference>
<dbReference type="FunFam" id="3.30.70.1300:FF:000001">
    <property type="entry name" value="UPF0301 protein YqgE"/>
    <property type="match status" value="1"/>
</dbReference>
<dbReference type="Gene3D" id="3.40.1740.10">
    <property type="entry name" value="VC0467-like"/>
    <property type="match status" value="1"/>
</dbReference>
<dbReference type="Gene3D" id="3.30.70.1300">
    <property type="entry name" value="VC0467-like domains"/>
    <property type="match status" value="1"/>
</dbReference>
<dbReference type="HAMAP" id="MF_00758">
    <property type="entry name" value="UPF0301"/>
    <property type="match status" value="1"/>
</dbReference>
<dbReference type="InterPro" id="IPR003774">
    <property type="entry name" value="AlgH-like"/>
</dbReference>
<dbReference type="NCBIfam" id="NF001266">
    <property type="entry name" value="PRK00228.1-1"/>
    <property type="match status" value="1"/>
</dbReference>
<dbReference type="PANTHER" id="PTHR30327">
    <property type="entry name" value="UNCHARACTERIZED PROTEIN YQGE"/>
    <property type="match status" value="1"/>
</dbReference>
<dbReference type="PANTHER" id="PTHR30327:SF1">
    <property type="entry name" value="UPF0301 PROTEIN YQGE"/>
    <property type="match status" value="1"/>
</dbReference>
<dbReference type="Pfam" id="PF02622">
    <property type="entry name" value="DUF179"/>
    <property type="match status" value="1"/>
</dbReference>
<dbReference type="SUPFAM" id="SSF143456">
    <property type="entry name" value="VC0467-like"/>
    <property type="match status" value="1"/>
</dbReference>
<organism>
    <name type="scientific">Salmonella schwarzengrund (strain CVM19633)</name>
    <dbReference type="NCBI Taxonomy" id="439843"/>
    <lineage>
        <taxon>Bacteria</taxon>
        <taxon>Pseudomonadati</taxon>
        <taxon>Pseudomonadota</taxon>
        <taxon>Gammaproteobacteria</taxon>
        <taxon>Enterobacterales</taxon>
        <taxon>Enterobacteriaceae</taxon>
        <taxon>Salmonella</taxon>
    </lineage>
</organism>
<evidence type="ECO:0000255" key="1">
    <source>
        <dbReference type="HAMAP-Rule" id="MF_00758"/>
    </source>
</evidence>